<proteinExistence type="inferred from homology"/>
<keyword id="KW-0342">GTP-binding</keyword>
<keyword id="KW-0378">Hydrolase</keyword>
<keyword id="KW-0479">Metal-binding</keyword>
<keyword id="KW-0547">Nucleotide-binding</keyword>
<keyword id="KW-0554">One-carbon metabolism</keyword>
<keyword id="KW-1185">Reference proteome</keyword>
<keyword id="KW-0862">Zinc</keyword>
<dbReference type="EC" id="3.5.4.16" evidence="2"/>
<dbReference type="EMBL" id="BA000036">
    <property type="protein sequence ID" value="BAC00089.1"/>
    <property type="molecule type" value="Genomic_DNA"/>
</dbReference>
<dbReference type="EMBL" id="BX927156">
    <property type="protein sequence ID" value="CAF20718.1"/>
    <property type="status" value="ALT_INIT"/>
    <property type="molecule type" value="Genomic_DNA"/>
</dbReference>
<dbReference type="RefSeq" id="NP_601891.1">
    <property type="nucleotide sequence ID" value="NC_003450.3"/>
</dbReference>
<dbReference type="SMR" id="Q8NM84"/>
<dbReference type="STRING" id="196627.cg2983"/>
<dbReference type="KEGG" id="cgb:cg2983"/>
<dbReference type="KEGG" id="cgl:Cgl2695"/>
<dbReference type="PATRIC" id="fig|196627.13.peg.2627"/>
<dbReference type="eggNOG" id="COG0302">
    <property type="taxonomic scope" value="Bacteria"/>
</dbReference>
<dbReference type="HOGENOM" id="CLU_049768_3_3_11"/>
<dbReference type="OrthoDB" id="9801207at2"/>
<dbReference type="BioCyc" id="CORYNE:G18NG-12312-MONOMER"/>
<dbReference type="UniPathway" id="UPA00848">
    <property type="reaction ID" value="UER00151"/>
</dbReference>
<dbReference type="Proteomes" id="UP000000582">
    <property type="component" value="Chromosome"/>
</dbReference>
<dbReference type="Proteomes" id="UP000001009">
    <property type="component" value="Chromosome"/>
</dbReference>
<dbReference type="GO" id="GO:0005737">
    <property type="term" value="C:cytoplasm"/>
    <property type="evidence" value="ECO:0007669"/>
    <property type="project" value="TreeGrafter"/>
</dbReference>
<dbReference type="GO" id="GO:0005525">
    <property type="term" value="F:GTP binding"/>
    <property type="evidence" value="ECO:0007669"/>
    <property type="project" value="UniProtKB-KW"/>
</dbReference>
<dbReference type="GO" id="GO:0003934">
    <property type="term" value="F:GTP cyclohydrolase I activity"/>
    <property type="evidence" value="ECO:0007669"/>
    <property type="project" value="UniProtKB-UniRule"/>
</dbReference>
<dbReference type="GO" id="GO:0008270">
    <property type="term" value="F:zinc ion binding"/>
    <property type="evidence" value="ECO:0007669"/>
    <property type="project" value="UniProtKB-UniRule"/>
</dbReference>
<dbReference type="GO" id="GO:0006730">
    <property type="term" value="P:one-carbon metabolic process"/>
    <property type="evidence" value="ECO:0007669"/>
    <property type="project" value="UniProtKB-UniRule"/>
</dbReference>
<dbReference type="GO" id="GO:0006729">
    <property type="term" value="P:tetrahydrobiopterin biosynthetic process"/>
    <property type="evidence" value="ECO:0007669"/>
    <property type="project" value="TreeGrafter"/>
</dbReference>
<dbReference type="GO" id="GO:0046654">
    <property type="term" value="P:tetrahydrofolate biosynthetic process"/>
    <property type="evidence" value="ECO:0007669"/>
    <property type="project" value="UniProtKB-UniRule"/>
</dbReference>
<dbReference type="FunFam" id="1.10.286.10:FF:000001">
    <property type="entry name" value="GTP cyclohydrolase 1"/>
    <property type="match status" value="1"/>
</dbReference>
<dbReference type="FunFam" id="3.30.1130.10:FF:000001">
    <property type="entry name" value="GTP cyclohydrolase 1"/>
    <property type="match status" value="1"/>
</dbReference>
<dbReference type="Gene3D" id="1.10.286.10">
    <property type="match status" value="1"/>
</dbReference>
<dbReference type="Gene3D" id="3.30.1130.10">
    <property type="match status" value="1"/>
</dbReference>
<dbReference type="HAMAP" id="MF_00223">
    <property type="entry name" value="FolE"/>
    <property type="match status" value="1"/>
</dbReference>
<dbReference type="InterPro" id="IPR043133">
    <property type="entry name" value="GTP-CH-I_C/QueF"/>
</dbReference>
<dbReference type="InterPro" id="IPR043134">
    <property type="entry name" value="GTP-CH-I_N"/>
</dbReference>
<dbReference type="InterPro" id="IPR001474">
    <property type="entry name" value="GTP_CycHdrlase_I"/>
</dbReference>
<dbReference type="InterPro" id="IPR018234">
    <property type="entry name" value="GTP_CycHdrlase_I_CS"/>
</dbReference>
<dbReference type="InterPro" id="IPR020602">
    <property type="entry name" value="GTP_CycHdrlase_I_dom"/>
</dbReference>
<dbReference type="NCBIfam" id="TIGR00063">
    <property type="entry name" value="folE"/>
    <property type="match status" value="1"/>
</dbReference>
<dbReference type="NCBIfam" id="NF006825">
    <property type="entry name" value="PRK09347.1-2"/>
    <property type="match status" value="1"/>
</dbReference>
<dbReference type="NCBIfam" id="NF006826">
    <property type="entry name" value="PRK09347.1-3"/>
    <property type="match status" value="1"/>
</dbReference>
<dbReference type="PANTHER" id="PTHR11109:SF7">
    <property type="entry name" value="GTP CYCLOHYDROLASE 1"/>
    <property type="match status" value="1"/>
</dbReference>
<dbReference type="PANTHER" id="PTHR11109">
    <property type="entry name" value="GTP CYCLOHYDROLASE I"/>
    <property type="match status" value="1"/>
</dbReference>
<dbReference type="Pfam" id="PF01227">
    <property type="entry name" value="GTP_cyclohydroI"/>
    <property type="match status" value="1"/>
</dbReference>
<dbReference type="SUPFAM" id="SSF55620">
    <property type="entry name" value="Tetrahydrobiopterin biosynthesis enzymes-like"/>
    <property type="match status" value="1"/>
</dbReference>
<dbReference type="PROSITE" id="PS00859">
    <property type="entry name" value="GTP_CYCLOHYDROL_1_1"/>
    <property type="match status" value="1"/>
</dbReference>
<dbReference type="PROSITE" id="PS00860">
    <property type="entry name" value="GTP_CYCLOHYDROL_1_2"/>
    <property type="match status" value="1"/>
</dbReference>
<name>GCH1_CORGL</name>
<sequence>MDNHAAVREFDEERATAAIRELLIAVGEDPDREGLLETPARVARAYKETFAGLHEDPTTVLEKTFSEGHEELVLVREIPIYSMCEHHLVPFFGVAHIGYIPGKSGKVTGLSKLARLADMFAKRPQVQERLTSQIADALVEKLDAQAVAVVIEAEHLCMAMRGIRKPGAVTTTSAVRGGFKNNAASRAEVFSLIRGH</sequence>
<reference key="1">
    <citation type="journal article" date="2003" name="Appl. Microbiol. Biotechnol.">
        <title>The Corynebacterium glutamicum genome: features and impacts on biotechnological processes.</title>
        <authorList>
            <person name="Ikeda M."/>
            <person name="Nakagawa S."/>
        </authorList>
    </citation>
    <scope>NUCLEOTIDE SEQUENCE [LARGE SCALE GENOMIC DNA]</scope>
    <source>
        <strain>ATCC 13032 / DSM 20300 / JCM 1318 / BCRC 11384 / CCUG 27702 / LMG 3730 / NBRC 12168 / NCIMB 10025 / NRRL B-2784 / 534</strain>
    </source>
</reference>
<reference key="2">
    <citation type="journal article" date="2003" name="J. Biotechnol.">
        <title>The complete Corynebacterium glutamicum ATCC 13032 genome sequence and its impact on the production of L-aspartate-derived amino acids and vitamins.</title>
        <authorList>
            <person name="Kalinowski J."/>
            <person name="Bathe B."/>
            <person name="Bartels D."/>
            <person name="Bischoff N."/>
            <person name="Bott M."/>
            <person name="Burkovski A."/>
            <person name="Dusch N."/>
            <person name="Eggeling L."/>
            <person name="Eikmanns B.J."/>
            <person name="Gaigalat L."/>
            <person name="Goesmann A."/>
            <person name="Hartmann M."/>
            <person name="Huthmacher K."/>
            <person name="Kraemer R."/>
            <person name="Linke B."/>
            <person name="McHardy A.C."/>
            <person name="Meyer F."/>
            <person name="Moeckel B."/>
            <person name="Pfefferle W."/>
            <person name="Puehler A."/>
            <person name="Rey D.A."/>
            <person name="Rueckert C."/>
            <person name="Rupp O."/>
            <person name="Sahm H."/>
            <person name="Wendisch V.F."/>
            <person name="Wiegraebe I."/>
            <person name="Tauch A."/>
        </authorList>
    </citation>
    <scope>NUCLEOTIDE SEQUENCE [LARGE SCALE GENOMIC DNA]</scope>
    <source>
        <strain>ATCC 13032 / DSM 20300 / JCM 1318 / BCRC 11384 / CCUG 27702 / LMG 3730 / NBRC 12168 / NCIMB 10025 / NRRL B-2784 / 534</strain>
    </source>
</reference>
<organism>
    <name type="scientific">Corynebacterium glutamicum (strain ATCC 13032 / DSM 20300 / JCM 1318 / BCRC 11384 / CCUG 27702 / LMG 3730 / NBRC 12168 / NCIMB 10025 / NRRL B-2784 / 534)</name>
    <dbReference type="NCBI Taxonomy" id="196627"/>
    <lineage>
        <taxon>Bacteria</taxon>
        <taxon>Bacillati</taxon>
        <taxon>Actinomycetota</taxon>
        <taxon>Actinomycetes</taxon>
        <taxon>Mycobacteriales</taxon>
        <taxon>Corynebacteriaceae</taxon>
        <taxon>Corynebacterium</taxon>
    </lineage>
</organism>
<gene>
    <name evidence="2" type="primary">folE</name>
    <name type="ordered locus">Cgl2695</name>
    <name type="ordered locus">cg2983</name>
</gene>
<comment type="catalytic activity">
    <reaction evidence="2">
        <text>GTP + H2O = 7,8-dihydroneopterin 3'-triphosphate + formate + H(+)</text>
        <dbReference type="Rhea" id="RHEA:17473"/>
        <dbReference type="ChEBI" id="CHEBI:15377"/>
        <dbReference type="ChEBI" id="CHEBI:15378"/>
        <dbReference type="ChEBI" id="CHEBI:15740"/>
        <dbReference type="ChEBI" id="CHEBI:37565"/>
        <dbReference type="ChEBI" id="CHEBI:58462"/>
        <dbReference type="EC" id="3.5.4.16"/>
    </reaction>
</comment>
<comment type="pathway">
    <text evidence="2">Cofactor biosynthesis; 7,8-dihydroneopterin triphosphate biosynthesis; 7,8-dihydroneopterin triphosphate from GTP: step 1/1.</text>
</comment>
<comment type="subunit">
    <text evidence="1">Toroid-shaped homodecamer, composed of two pentamers of five dimers.</text>
</comment>
<comment type="similarity">
    <text evidence="2">Belongs to the GTP cyclohydrolase I family.</text>
</comment>
<comment type="sequence caution" evidence="3">
    <conflict type="erroneous initiation">
        <sequence resource="EMBL-CDS" id="CAF20718"/>
    </conflict>
</comment>
<evidence type="ECO:0000250" key="1"/>
<evidence type="ECO:0000255" key="2">
    <source>
        <dbReference type="HAMAP-Rule" id="MF_00223"/>
    </source>
</evidence>
<evidence type="ECO:0000305" key="3"/>
<protein>
    <recommendedName>
        <fullName evidence="2">GTP cyclohydrolase 1</fullName>
        <ecNumber evidence="2">3.5.4.16</ecNumber>
    </recommendedName>
    <alternativeName>
        <fullName evidence="2">GTP cyclohydrolase I</fullName>
        <shortName evidence="2">GTP-CH-I</shortName>
    </alternativeName>
</protein>
<accession>Q8NM84</accession>
<feature type="chain" id="PRO_0000119401" description="GTP cyclohydrolase 1">
    <location>
        <begin position="1"/>
        <end position="196"/>
    </location>
</feature>
<feature type="binding site" evidence="2">
    <location>
        <position position="84"/>
    </location>
    <ligand>
        <name>Zn(2+)</name>
        <dbReference type="ChEBI" id="CHEBI:29105"/>
    </ligand>
</feature>
<feature type="binding site" evidence="2">
    <location>
        <position position="87"/>
    </location>
    <ligand>
        <name>Zn(2+)</name>
        <dbReference type="ChEBI" id="CHEBI:29105"/>
    </ligand>
</feature>
<feature type="binding site" evidence="2">
    <location>
        <position position="157"/>
    </location>
    <ligand>
        <name>Zn(2+)</name>
        <dbReference type="ChEBI" id="CHEBI:29105"/>
    </ligand>
</feature>